<comment type="function">
    <text evidence="1">May act as a scaffolding protein within caveolar membranes, functionally participating in formation of caveolae or caveolae-like vesicles.</text>
</comment>
<comment type="subunit">
    <text evidence="1">Heterooligomeric complex of flotillin-1 and flotillin-2 and caveolin-1 and caveolin-2. Interacts with ECPAS.</text>
</comment>
<comment type="subcellular location">
    <subcellularLocation>
        <location evidence="3">Cell membrane</location>
        <topology evidence="3">Peripheral membrane protein</topology>
    </subcellularLocation>
    <subcellularLocation>
        <location evidence="3">Endosome</location>
    </subcellularLocation>
    <subcellularLocation>
        <location evidence="2">Membrane</location>
        <location evidence="2">Caveola</location>
        <topology evidence="2">Peripheral membrane protein</topology>
    </subcellularLocation>
    <subcellularLocation>
        <location evidence="3">Melanosome</location>
    </subcellularLocation>
    <subcellularLocation>
        <location evidence="3">Membrane raft</location>
    </subcellularLocation>
    <text evidence="2 3">Identified by mass spectrometry in melanosome fractions from stage I to stage IV. Membrane-associated protein of caveola.</text>
</comment>
<comment type="similarity">
    <text evidence="4">Belongs to the band 7/mec-2 family. Flotillin subfamily.</text>
</comment>
<accession>Q08DN8</accession>
<keyword id="KW-1003">Cell membrane</keyword>
<keyword id="KW-0967">Endosome</keyword>
<keyword id="KW-0472">Membrane</keyword>
<keyword id="KW-0597">Phosphoprotein</keyword>
<keyword id="KW-1185">Reference proteome</keyword>
<organism>
    <name type="scientific">Bos taurus</name>
    <name type="common">Bovine</name>
    <dbReference type="NCBI Taxonomy" id="9913"/>
    <lineage>
        <taxon>Eukaryota</taxon>
        <taxon>Metazoa</taxon>
        <taxon>Chordata</taxon>
        <taxon>Craniata</taxon>
        <taxon>Vertebrata</taxon>
        <taxon>Euteleostomi</taxon>
        <taxon>Mammalia</taxon>
        <taxon>Eutheria</taxon>
        <taxon>Laurasiatheria</taxon>
        <taxon>Artiodactyla</taxon>
        <taxon>Ruminantia</taxon>
        <taxon>Pecora</taxon>
        <taxon>Bovidae</taxon>
        <taxon>Bovinae</taxon>
        <taxon>Bos</taxon>
    </lineage>
</organism>
<sequence length="427" mass="47353">MFFTCGPNEAMVVSGFCRSPPVMVAGGRVFVLPCIQQIQRISLNTLTLNVKSEKVYTRHGVPISVTGIAQVKIQGQNKEMLAAACQMFLGKTEAEIAHIALETLEGHQRAIMAHMTVEEIYKDRQKFSEQVFKVASSDLVNMGISVVSYTLKDIHDDQDYLHSLGKARTAQVQKDARIGEAEAKRDAGIREAKAKQEKVSAQYLSEIEMAKAQRDYELKKAAYDIEVNTRRAQADLAYQLQVAKTKQQIEEQRVQVQVVERAQQVAVQEQEIARREKELEARVRKPAEAERYKLERLAEAEKSQLIMQAEAEAEAVRMRGEAEAFAIGARARAEAEQMAKKAEAFQLYQEAAQLDMLLEKLPQVAEEISGPLTSANKITLVSSGSGAMGAAKVTGEVLDILSRLPESVERLTGVSISQVNHKPLRTA</sequence>
<evidence type="ECO:0000250" key="1"/>
<evidence type="ECO:0000250" key="2">
    <source>
        <dbReference type="UniProtKB" id="O08917"/>
    </source>
</evidence>
<evidence type="ECO:0000250" key="3">
    <source>
        <dbReference type="UniProtKB" id="O75955"/>
    </source>
</evidence>
<evidence type="ECO:0000305" key="4"/>
<dbReference type="EMBL" id="BC123642">
    <property type="protein sequence ID" value="AAI23643.1"/>
    <property type="molecule type" value="mRNA"/>
</dbReference>
<dbReference type="RefSeq" id="NP_001070355.1">
    <property type="nucleotide sequence ID" value="NM_001076887.1"/>
</dbReference>
<dbReference type="RefSeq" id="XP_005223719.1">
    <property type="nucleotide sequence ID" value="XM_005223662.5"/>
</dbReference>
<dbReference type="RefSeq" id="XP_005223720.1">
    <property type="nucleotide sequence ID" value="XM_005223663.5"/>
</dbReference>
<dbReference type="RefSeq" id="XP_005223721.1">
    <property type="nucleotide sequence ID" value="XM_005223664.5"/>
</dbReference>
<dbReference type="RefSeq" id="XP_059736363.1">
    <property type="nucleotide sequence ID" value="XM_059880380.1"/>
</dbReference>
<dbReference type="SMR" id="Q08DN8"/>
<dbReference type="FunCoup" id="Q08DN8">
    <property type="interactions" value="933"/>
</dbReference>
<dbReference type="STRING" id="9913.ENSBTAP00000013135"/>
<dbReference type="SwissPalm" id="Q08DN8"/>
<dbReference type="PaxDb" id="9913-ENSBTAP00000013135"/>
<dbReference type="Ensembl" id="ENSBTAT00000013135.6">
    <property type="protein sequence ID" value="ENSBTAP00000013135.5"/>
    <property type="gene ID" value="ENSBTAG00000009960.6"/>
</dbReference>
<dbReference type="GeneID" id="532573"/>
<dbReference type="KEGG" id="bta:532573"/>
<dbReference type="CTD" id="10211"/>
<dbReference type="VEuPathDB" id="HostDB:ENSBTAG00000009960"/>
<dbReference type="VGNC" id="VGNC:29036">
    <property type="gene designation" value="FLOT1"/>
</dbReference>
<dbReference type="eggNOG" id="KOG2668">
    <property type="taxonomic scope" value="Eukaryota"/>
</dbReference>
<dbReference type="GeneTree" id="ENSGT00560000077232"/>
<dbReference type="HOGENOM" id="CLU_038134_1_0_1"/>
<dbReference type="InParanoid" id="Q08DN8"/>
<dbReference type="OMA" id="AFQIQDI"/>
<dbReference type="OrthoDB" id="6080404at2759"/>
<dbReference type="TreeFam" id="TF324879"/>
<dbReference type="Reactome" id="R-BTA-5213460">
    <property type="pathway name" value="RIPK1-mediated regulated necrosis"/>
</dbReference>
<dbReference type="Reactome" id="R-BTA-5675482">
    <property type="pathway name" value="Regulation of necroptotic cell death"/>
</dbReference>
<dbReference type="Reactome" id="R-BTA-8849932">
    <property type="pathway name" value="Synaptic adhesion-like molecules"/>
</dbReference>
<dbReference type="Reactome" id="R-BTA-8980692">
    <property type="pathway name" value="RHOA GTPase cycle"/>
</dbReference>
<dbReference type="Reactome" id="R-BTA-9013106">
    <property type="pathway name" value="RHOC GTPase cycle"/>
</dbReference>
<dbReference type="Proteomes" id="UP000009136">
    <property type="component" value="Chromosome 23"/>
</dbReference>
<dbReference type="Bgee" id="ENSBTAG00000009960">
    <property type="expression patterns" value="Expressed in trachea and 106 other cell types or tissues"/>
</dbReference>
<dbReference type="GO" id="GO:0005912">
    <property type="term" value="C:adherens junction"/>
    <property type="evidence" value="ECO:0007669"/>
    <property type="project" value="Ensembl"/>
</dbReference>
<dbReference type="GO" id="GO:0016323">
    <property type="term" value="C:basolateral plasma membrane"/>
    <property type="evidence" value="ECO:0007669"/>
    <property type="project" value="Ensembl"/>
</dbReference>
<dbReference type="GO" id="GO:0044291">
    <property type="term" value="C:cell-cell contact zone"/>
    <property type="evidence" value="ECO:0007669"/>
    <property type="project" value="Ensembl"/>
</dbReference>
<dbReference type="GO" id="GO:0034451">
    <property type="term" value="C:centriolar satellite"/>
    <property type="evidence" value="ECO:0007669"/>
    <property type="project" value="Ensembl"/>
</dbReference>
<dbReference type="GO" id="GO:0008180">
    <property type="term" value="C:COP9 signalosome"/>
    <property type="evidence" value="ECO:0007669"/>
    <property type="project" value="Ensembl"/>
</dbReference>
<dbReference type="GO" id="GO:0030864">
    <property type="term" value="C:cortical actin cytoskeleton"/>
    <property type="evidence" value="ECO:0007669"/>
    <property type="project" value="Ensembl"/>
</dbReference>
<dbReference type="GO" id="GO:0031410">
    <property type="term" value="C:cytoplasmic vesicle"/>
    <property type="evidence" value="ECO:0000318"/>
    <property type="project" value="GO_Central"/>
</dbReference>
<dbReference type="GO" id="GO:0098691">
    <property type="term" value="C:dopaminergic synapse"/>
    <property type="evidence" value="ECO:0007669"/>
    <property type="project" value="Ensembl"/>
</dbReference>
<dbReference type="GO" id="GO:0005769">
    <property type="term" value="C:early endosome"/>
    <property type="evidence" value="ECO:0007669"/>
    <property type="project" value="Ensembl"/>
</dbReference>
<dbReference type="GO" id="GO:0005768">
    <property type="term" value="C:endosome"/>
    <property type="evidence" value="ECO:0000250"/>
    <property type="project" value="UniProtKB"/>
</dbReference>
<dbReference type="GO" id="GO:0009897">
    <property type="term" value="C:external side of plasma membrane"/>
    <property type="evidence" value="ECO:0007669"/>
    <property type="project" value="Ensembl"/>
</dbReference>
<dbReference type="GO" id="GO:0016600">
    <property type="term" value="C:flotillin complex"/>
    <property type="evidence" value="ECO:0000318"/>
    <property type="project" value="GO_Central"/>
</dbReference>
<dbReference type="GO" id="GO:0030027">
    <property type="term" value="C:lamellipodium"/>
    <property type="evidence" value="ECO:0007669"/>
    <property type="project" value="Ensembl"/>
</dbReference>
<dbReference type="GO" id="GO:0042470">
    <property type="term" value="C:melanosome"/>
    <property type="evidence" value="ECO:0007669"/>
    <property type="project" value="UniProtKB-SubCell"/>
</dbReference>
<dbReference type="GO" id="GO:0045121">
    <property type="term" value="C:membrane raft"/>
    <property type="evidence" value="ECO:0000250"/>
    <property type="project" value="UniProtKB"/>
</dbReference>
<dbReference type="GO" id="GO:0005886">
    <property type="term" value="C:plasma membrane"/>
    <property type="evidence" value="ECO:0000318"/>
    <property type="project" value="GO_Central"/>
</dbReference>
<dbReference type="GO" id="GO:0042383">
    <property type="term" value="C:sarcolemma"/>
    <property type="evidence" value="ECO:0007669"/>
    <property type="project" value="Ensembl"/>
</dbReference>
<dbReference type="GO" id="GO:0001931">
    <property type="term" value="C:uropod"/>
    <property type="evidence" value="ECO:0007669"/>
    <property type="project" value="Ensembl"/>
</dbReference>
<dbReference type="GO" id="GO:0002020">
    <property type="term" value="F:protease binding"/>
    <property type="evidence" value="ECO:0000318"/>
    <property type="project" value="GO_Central"/>
</dbReference>
<dbReference type="GO" id="GO:0007409">
    <property type="term" value="P:axonogenesis"/>
    <property type="evidence" value="ECO:0007669"/>
    <property type="project" value="Ensembl"/>
</dbReference>
<dbReference type="GO" id="GO:0071360">
    <property type="term" value="P:cellular response to exogenous dsRNA"/>
    <property type="evidence" value="ECO:0007669"/>
    <property type="project" value="Ensembl"/>
</dbReference>
<dbReference type="GO" id="GO:0033227">
    <property type="term" value="P:dsRNA transport"/>
    <property type="evidence" value="ECO:0007669"/>
    <property type="project" value="Ensembl"/>
</dbReference>
<dbReference type="GO" id="GO:0022617">
    <property type="term" value="P:extracellular matrix disassembly"/>
    <property type="evidence" value="ECO:0007669"/>
    <property type="project" value="Ensembl"/>
</dbReference>
<dbReference type="GO" id="GO:0035556">
    <property type="term" value="P:intracellular signal transduction"/>
    <property type="evidence" value="ECO:0007669"/>
    <property type="project" value="Ensembl"/>
</dbReference>
<dbReference type="GO" id="GO:0044854">
    <property type="term" value="P:plasma membrane raft assembly"/>
    <property type="evidence" value="ECO:0007669"/>
    <property type="project" value="Ensembl"/>
</dbReference>
<dbReference type="GO" id="GO:0043123">
    <property type="term" value="P:positive regulation of canonical NF-kappaB signal transduction"/>
    <property type="evidence" value="ECO:0007669"/>
    <property type="project" value="Ensembl"/>
</dbReference>
<dbReference type="GO" id="GO:1901890">
    <property type="term" value="P:positive regulation of cell junction assembly"/>
    <property type="evidence" value="ECO:0000318"/>
    <property type="project" value="GO_Central"/>
</dbReference>
<dbReference type="GO" id="GO:2000049">
    <property type="term" value="P:positive regulation of cell-cell adhesion mediated by cadherin"/>
    <property type="evidence" value="ECO:0000318"/>
    <property type="project" value="GO_Central"/>
</dbReference>
<dbReference type="GO" id="GO:0045807">
    <property type="term" value="P:positive regulation of endocytosis"/>
    <property type="evidence" value="ECO:0000318"/>
    <property type="project" value="GO_Central"/>
</dbReference>
<dbReference type="GO" id="GO:0034116">
    <property type="term" value="P:positive regulation of heterotypic cell-cell adhesion"/>
    <property type="evidence" value="ECO:0007669"/>
    <property type="project" value="Ensembl"/>
</dbReference>
<dbReference type="GO" id="GO:0032728">
    <property type="term" value="P:positive regulation of interferon-beta production"/>
    <property type="evidence" value="ECO:0007669"/>
    <property type="project" value="Ensembl"/>
</dbReference>
<dbReference type="GO" id="GO:1901741">
    <property type="term" value="P:positive regulation of myoblast fusion"/>
    <property type="evidence" value="ECO:0007669"/>
    <property type="project" value="Ensembl"/>
</dbReference>
<dbReference type="GO" id="GO:0048643">
    <property type="term" value="P:positive regulation of skeletal muscle tissue development"/>
    <property type="evidence" value="ECO:0007669"/>
    <property type="project" value="Ensembl"/>
</dbReference>
<dbReference type="GO" id="GO:0032226">
    <property type="term" value="P:positive regulation of synaptic transmission, dopaminergic"/>
    <property type="evidence" value="ECO:0007669"/>
    <property type="project" value="Ensembl"/>
</dbReference>
<dbReference type="GO" id="GO:0034141">
    <property type="term" value="P:positive regulation of toll-like receptor 3 signaling pathway"/>
    <property type="evidence" value="ECO:0007669"/>
    <property type="project" value="Ensembl"/>
</dbReference>
<dbReference type="GO" id="GO:0072659">
    <property type="term" value="P:protein localization to plasma membrane"/>
    <property type="evidence" value="ECO:0000318"/>
    <property type="project" value="GO_Central"/>
</dbReference>
<dbReference type="GO" id="GO:0050821">
    <property type="term" value="P:protein stabilization"/>
    <property type="evidence" value="ECO:0007669"/>
    <property type="project" value="Ensembl"/>
</dbReference>
<dbReference type="GO" id="GO:0051580">
    <property type="term" value="P:regulation of neurotransmitter uptake"/>
    <property type="evidence" value="ECO:0007669"/>
    <property type="project" value="Ensembl"/>
</dbReference>
<dbReference type="GO" id="GO:0002090">
    <property type="term" value="P:regulation of receptor internalization"/>
    <property type="evidence" value="ECO:0000318"/>
    <property type="project" value="GO_Central"/>
</dbReference>
<dbReference type="GO" id="GO:0035023">
    <property type="term" value="P:regulation of Rho protein signal transduction"/>
    <property type="evidence" value="ECO:0007669"/>
    <property type="project" value="Ensembl"/>
</dbReference>
<dbReference type="GO" id="GO:0034976">
    <property type="term" value="P:response to endoplasmic reticulum stress"/>
    <property type="evidence" value="ECO:0007669"/>
    <property type="project" value="Ensembl"/>
</dbReference>
<dbReference type="CDD" id="cd03399">
    <property type="entry name" value="SPFH_flotillin"/>
    <property type="match status" value="1"/>
</dbReference>
<dbReference type="FunFam" id="3.30.479.30:FF:000003">
    <property type="entry name" value="Flotillin 2"/>
    <property type="match status" value="1"/>
</dbReference>
<dbReference type="Gene3D" id="3.30.479.30">
    <property type="entry name" value="Band 7 domain"/>
    <property type="match status" value="1"/>
</dbReference>
<dbReference type="InterPro" id="IPR001107">
    <property type="entry name" value="Band_7"/>
</dbReference>
<dbReference type="InterPro" id="IPR036013">
    <property type="entry name" value="Band_7/SPFH_dom_sf"/>
</dbReference>
<dbReference type="InterPro" id="IPR031905">
    <property type="entry name" value="Flotillin_C"/>
</dbReference>
<dbReference type="InterPro" id="IPR027705">
    <property type="entry name" value="Flotillin_fam"/>
</dbReference>
<dbReference type="PANTHER" id="PTHR13806:SF46">
    <property type="entry name" value="FLOTILLIN-1-RELATED"/>
    <property type="match status" value="1"/>
</dbReference>
<dbReference type="PANTHER" id="PTHR13806">
    <property type="entry name" value="FLOTILLIN-RELATED"/>
    <property type="match status" value="1"/>
</dbReference>
<dbReference type="Pfam" id="PF01145">
    <property type="entry name" value="Band_7"/>
    <property type="match status" value="1"/>
</dbReference>
<dbReference type="Pfam" id="PF15975">
    <property type="entry name" value="Flot"/>
    <property type="match status" value="1"/>
</dbReference>
<dbReference type="SMART" id="SM00244">
    <property type="entry name" value="PHB"/>
    <property type="match status" value="1"/>
</dbReference>
<dbReference type="SUPFAM" id="SSF117892">
    <property type="entry name" value="Band 7/SPFH domain"/>
    <property type="match status" value="1"/>
</dbReference>
<name>FLOT1_BOVIN</name>
<proteinExistence type="evidence at transcript level"/>
<reference key="1">
    <citation type="submission" date="2006-09" db="EMBL/GenBank/DDBJ databases">
        <authorList>
            <consortium name="NIH - Mammalian Gene Collection (MGC) project"/>
        </authorList>
    </citation>
    <scope>NUCLEOTIDE SEQUENCE [LARGE SCALE MRNA]</scope>
    <source>
        <strain>Hereford</strain>
        <tissue>Fetal muscle</tissue>
    </source>
</reference>
<feature type="chain" id="PRO_0000262588" description="Flotillin-1">
    <location>
        <begin position="1"/>
        <end position="427"/>
    </location>
</feature>
<feature type="modified residue" description="Phosphoserine" evidence="3">
    <location>
        <position position="19"/>
    </location>
</feature>
<feature type="modified residue" description="Phosphoserine" evidence="3">
    <location>
        <position position="163"/>
    </location>
</feature>
<feature type="modified residue" description="Phosphoserine" evidence="3">
    <location>
        <position position="385"/>
    </location>
</feature>
<gene>
    <name type="primary">FLOT1</name>
</gene>
<protein>
    <recommendedName>
        <fullName>Flotillin-1</fullName>
    </recommendedName>
</protein>